<reference key="1">
    <citation type="journal article" date="2004" name="Nature">
        <title>The DNA sequence and comparative analysis of human chromosome 10.</title>
        <authorList>
            <person name="Deloukas P."/>
            <person name="Earthrowl M.E."/>
            <person name="Grafham D.V."/>
            <person name="Rubenfield M."/>
            <person name="French L."/>
            <person name="Steward C.A."/>
            <person name="Sims S.K."/>
            <person name="Jones M.C."/>
            <person name="Searle S."/>
            <person name="Scott C."/>
            <person name="Howe K."/>
            <person name="Hunt S.E."/>
            <person name="Andrews T.D."/>
            <person name="Gilbert J.G.R."/>
            <person name="Swarbreck D."/>
            <person name="Ashurst J.L."/>
            <person name="Taylor A."/>
            <person name="Battles J."/>
            <person name="Bird C.P."/>
            <person name="Ainscough R."/>
            <person name="Almeida J.P."/>
            <person name="Ashwell R.I.S."/>
            <person name="Ambrose K.D."/>
            <person name="Babbage A.K."/>
            <person name="Bagguley C.L."/>
            <person name="Bailey J."/>
            <person name="Banerjee R."/>
            <person name="Bates K."/>
            <person name="Beasley H."/>
            <person name="Bray-Allen S."/>
            <person name="Brown A.J."/>
            <person name="Brown J.Y."/>
            <person name="Burford D.C."/>
            <person name="Burrill W."/>
            <person name="Burton J."/>
            <person name="Cahill P."/>
            <person name="Camire D."/>
            <person name="Carter N.P."/>
            <person name="Chapman J.C."/>
            <person name="Clark S.Y."/>
            <person name="Clarke G."/>
            <person name="Clee C.M."/>
            <person name="Clegg S."/>
            <person name="Corby N."/>
            <person name="Coulson A."/>
            <person name="Dhami P."/>
            <person name="Dutta I."/>
            <person name="Dunn M."/>
            <person name="Faulkner L."/>
            <person name="Frankish A."/>
            <person name="Frankland J.A."/>
            <person name="Garner P."/>
            <person name="Garnett J."/>
            <person name="Gribble S."/>
            <person name="Griffiths C."/>
            <person name="Grocock R."/>
            <person name="Gustafson E."/>
            <person name="Hammond S."/>
            <person name="Harley J.L."/>
            <person name="Hart E."/>
            <person name="Heath P.D."/>
            <person name="Ho T.P."/>
            <person name="Hopkins B."/>
            <person name="Horne J."/>
            <person name="Howden P.J."/>
            <person name="Huckle E."/>
            <person name="Hynds C."/>
            <person name="Johnson C."/>
            <person name="Johnson D."/>
            <person name="Kana A."/>
            <person name="Kay M."/>
            <person name="Kimberley A.M."/>
            <person name="Kershaw J.K."/>
            <person name="Kokkinaki M."/>
            <person name="Laird G.K."/>
            <person name="Lawlor S."/>
            <person name="Lee H.M."/>
            <person name="Leongamornlert D.A."/>
            <person name="Laird G."/>
            <person name="Lloyd C."/>
            <person name="Lloyd D.M."/>
            <person name="Loveland J."/>
            <person name="Lovell J."/>
            <person name="McLaren S."/>
            <person name="McLay K.E."/>
            <person name="McMurray A."/>
            <person name="Mashreghi-Mohammadi M."/>
            <person name="Matthews L."/>
            <person name="Milne S."/>
            <person name="Nickerson T."/>
            <person name="Nguyen M."/>
            <person name="Overton-Larty E."/>
            <person name="Palmer S.A."/>
            <person name="Pearce A.V."/>
            <person name="Peck A.I."/>
            <person name="Pelan S."/>
            <person name="Phillimore B."/>
            <person name="Porter K."/>
            <person name="Rice C.M."/>
            <person name="Rogosin A."/>
            <person name="Ross M.T."/>
            <person name="Sarafidou T."/>
            <person name="Sehra H.K."/>
            <person name="Shownkeen R."/>
            <person name="Skuce C.D."/>
            <person name="Smith M."/>
            <person name="Standring L."/>
            <person name="Sycamore N."/>
            <person name="Tester J."/>
            <person name="Thorpe A."/>
            <person name="Torcasso W."/>
            <person name="Tracey A."/>
            <person name="Tromans A."/>
            <person name="Tsolas J."/>
            <person name="Wall M."/>
            <person name="Walsh J."/>
            <person name="Wang H."/>
            <person name="Weinstock K."/>
            <person name="West A.P."/>
            <person name="Willey D.L."/>
            <person name="Whitehead S.L."/>
            <person name="Wilming L."/>
            <person name="Wray P.W."/>
            <person name="Young L."/>
            <person name="Chen Y."/>
            <person name="Lovering R.C."/>
            <person name="Moschonas N.K."/>
            <person name="Siebert R."/>
            <person name="Fechtel K."/>
            <person name="Bentley D."/>
            <person name="Durbin R.M."/>
            <person name="Hubbard T."/>
            <person name="Doucette-Stamm L."/>
            <person name="Beck S."/>
            <person name="Smith D.R."/>
            <person name="Rogers J."/>
        </authorList>
    </citation>
    <scope>NUCLEOTIDE SEQUENCE [LARGE SCALE GENOMIC DNA]</scope>
</reference>
<reference key="2">
    <citation type="journal article" date="2004" name="Genome Res.">
        <title>The status, quality, and expansion of the NIH full-length cDNA project: the Mammalian Gene Collection (MGC).</title>
        <authorList>
            <consortium name="The MGC Project Team"/>
        </authorList>
    </citation>
    <scope>NUCLEOTIDE SEQUENCE [LARGE SCALE MRNA]</scope>
    <source>
        <tissue>Hypothalamus</tissue>
        <tissue>Lung carcinoma</tissue>
    </source>
</reference>
<reference key="3">
    <citation type="journal article" date="2011" name="EMBO J.">
        <title>SCF(FBXL15) regulates BMP signalling by directing the degradation of HECT-type ubiquitin ligase Smurf1.</title>
        <authorList>
            <person name="Cui Y."/>
            <person name="He S."/>
            <person name="Xing C."/>
            <person name="Lu K."/>
            <person name="Wang J."/>
            <person name="Xing G."/>
            <person name="Meng A."/>
            <person name="Jia S."/>
            <person name="He F."/>
            <person name="Zhang L."/>
        </authorList>
    </citation>
    <scope>FUNCTION</scope>
    <scope>SUBCELLULAR LOCATION</scope>
    <scope>IDENTIFICATION IN A SCF PROTEIN LIGASE COMPLEX</scope>
    <scope>INTERACTION WITH SMURF1; SMURF2 AND WWP2</scope>
</reference>
<reference key="4">
    <citation type="journal article" date="2012" name="Proc. Natl. Acad. Sci. U.S.A.">
        <title>N-terminal acetylome analyses and functional insights of the N-terminal acetyltransferase NatB.</title>
        <authorList>
            <person name="Van Damme P."/>
            <person name="Lasa M."/>
            <person name="Polevoda B."/>
            <person name="Gazquez C."/>
            <person name="Elosegui-Artola A."/>
            <person name="Kim D.S."/>
            <person name="De Juan-Pardo E."/>
            <person name="Demeyer K."/>
            <person name="Hole K."/>
            <person name="Larrea E."/>
            <person name="Timmerman E."/>
            <person name="Prieto J."/>
            <person name="Arnesen T."/>
            <person name="Sherman F."/>
            <person name="Gevaert K."/>
            <person name="Aldabe R."/>
        </authorList>
    </citation>
    <scope>ACETYLATION [LARGE SCALE ANALYSIS] AT MET-1</scope>
    <scope>IDENTIFICATION BY MASS SPECTROMETRY [LARGE SCALE ANALYSIS]</scope>
</reference>
<keyword id="KW-0007">Acetylation</keyword>
<keyword id="KW-0963">Cytoplasm</keyword>
<keyword id="KW-0433">Leucine-rich repeat</keyword>
<keyword id="KW-1267">Proteomics identification</keyword>
<keyword id="KW-1185">Reference proteome</keyword>
<keyword id="KW-0677">Repeat</keyword>
<keyword id="KW-0833">Ubl conjugation pathway</keyword>
<dbReference type="EMBL" id="AL121928">
    <property type="status" value="NOT_ANNOTATED_CDS"/>
    <property type="molecule type" value="Genomic_DNA"/>
</dbReference>
<dbReference type="EMBL" id="BC002912">
    <property type="protein sequence ID" value="AAH02912.1"/>
    <property type="status" value="ALT_INIT"/>
    <property type="molecule type" value="mRNA"/>
</dbReference>
<dbReference type="EMBL" id="BC036120">
    <property type="protein sequence ID" value="AAH36120.1"/>
    <property type="status" value="ALT_INIT"/>
    <property type="molecule type" value="mRNA"/>
</dbReference>
<dbReference type="EMBL" id="BC130566">
    <property type="protein sequence ID" value="AAI30567.1"/>
    <property type="molecule type" value="mRNA"/>
</dbReference>
<dbReference type="CCDS" id="CCDS31273.1"/>
<dbReference type="RefSeq" id="NP_001374223.1">
    <property type="nucleotide sequence ID" value="NM_001387294.1"/>
</dbReference>
<dbReference type="RefSeq" id="NP_077302.3">
    <property type="nucleotide sequence ID" value="NM_024326.3"/>
</dbReference>
<dbReference type="RefSeq" id="XP_005270207.1">
    <property type="nucleotide sequence ID" value="XM_005270150.4"/>
</dbReference>
<dbReference type="RefSeq" id="XP_005270208.1">
    <property type="nucleotide sequence ID" value="XM_005270151.3"/>
</dbReference>
<dbReference type="RefSeq" id="XP_016872120.1">
    <property type="nucleotide sequence ID" value="XM_017016631.1"/>
</dbReference>
<dbReference type="SMR" id="Q9H469"/>
<dbReference type="BioGRID" id="122593">
    <property type="interactions" value="31"/>
</dbReference>
<dbReference type="ComplexPortal" id="CPX-2492">
    <property type="entry name" value="SCF E3 ubiquitin ligase complex, FBXL15 variant"/>
</dbReference>
<dbReference type="FunCoup" id="Q9H469">
    <property type="interactions" value="215"/>
</dbReference>
<dbReference type="IntAct" id="Q9H469">
    <property type="interactions" value="25"/>
</dbReference>
<dbReference type="MINT" id="Q9H469"/>
<dbReference type="STRING" id="9606.ENSP00000224862"/>
<dbReference type="iPTMnet" id="Q9H469"/>
<dbReference type="PhosphoSitePlus" id="Q9H469"/>
<dbReference type="BioMuta" id="FBXL15"/>
<dbReference type="DMDM" id="239938631"/>
<dbReference type="jPOST" id="Q9H469"/>
<dbReference type="MassIVE" id="Q9H469"/>
<dbReference type="PaxDb" id="9606-ENSP00000224862"/>
<dbReference type="PeptideAtlas" id="Q9H469"/>
<dbReference type="ProteomicsDB" id="80789"/>
<dbReference type="Pumba" id="Q9H469"/>
<dbReference type="Antibodypedia" id="53264">
    <property type="antibodies" value="88 antibodies from 15 providers"/>
</dbReference>
<dbReference type="DNASU" id="79176"/>
<dbReference type="Ensembl" id="ENST00000369956.8">
    <property type="protein sequence ID" value="ENSP00000358972.3"/>
    <property type="gene ID" value="ENSG00000107872.14"/>
</dbReference>
<dbReference type="GeneID" id="79176"/>
<dbReference type="KEGG" id="hsa:79176"/>
<dbReference type="MANE-Select" id="ENST00000369956.8">
    <property type="protein sequence ID" value="ENSP00000358972.3"/>
    <property type="RefSeq nucleotide sequence ID" value="NM_024326.4"/>
    <property type="RefSeq protein sequence ID" value="NP_077302.3"/>
</dbReference>
<dbReference type="UCSC" id="uc001kvk.2">
    <property type="organism name" value="human"/>
</dbReference>
<dbReference type="AGR" id="HGNC:28155"/>
<dbReference type="CTD" id="79176"/>
<dbReference type="DisGeNET" id="79176"/>
<dbReference type="GeneCards" id="FBXL15"/>
<dbReference type="HGNC" id="HGNC:28155">
    <property type="gene designation" value="FBXL15"/>
</dbReference>
<dbReference type="HPA" id="ENSG00000107872">
    <property type="expression patterns" value="Low tissue specificity"/>
</dbReference>
<dbReference type="MIM" id="610287">
    <property type="type" value="gene"/>
</dbReference>
<dbReference type="neXtProt" id="NX_Q9H469"/>
<dbReference type="OpenTargets" id="ENSG00000107872"/>
<dbReference type="PharmGKB" id="PA134928704"/>
<dbReference type="VEuPathDB" id="HostDB:ENSG00000107872"/>
<dbReference type="eggNOG" id="KOG1947">
    <property type="taxonomic scope" value="Eukaryota"/>
</dbReference>
<dbReference type="GeneTree" id="ENSGT00940000160250"/>
<dbReference type="InParanoid" id="Q9H469"/>
<dbReference type="OMA" id="CHRITER"/>
<dbReference type="OrthoDB" id="27842at2759"/>
<dbReference type="PAN-GO" id="Q9H469">
    <property type="GO annotations" value="2 GO annotations based on evolutionary models"/>
</dbReference>
<dbReference type="PhylomeDB" id="Q9H469"/>
<dbReference type="TreeFam" id="TF326769"/>
<dbReference type="PathwayCommons" id="Q9H469"/>
<dbReference type="Reactome" id="R-HSA-8951664">
    <property type="pathway name" value="Neddylation"/>
</dbReference>
<dbReference type="Reactome" id="R-HSA-983168">
    <property type="pathway name" value="Antigen processing: Ubiquitination &amp; Proteasome degradation"/>
</dbReference>
<dbReference type="SignaLink" id="Q9H469"/>
<dbReference type="SIGNOR" id="Q9H469"/>
<dbReference type="UniPathway" id="UPA00143"/>
<dbReference type="BioGRID-ORCS" id="79176">
    <property type="hits" value="10 hits in 1194 CRISPR screens"/>
</dbReference>
<dbReference type="ChiTaRS" id="FBXL15">
    <property type="organism name" value="human"/>
</dbReference>
<dbReference type="GenomeRNAi" id="79176"/>
<dbReference type="Pharos" id="Q9H469">
    <property type="development level" value="Tbio"/>
</dbReference>
<dbReference type="PRO" id="PR:Q9H469"/>
<dbReference type="Proteomes" id="UP000005640">
    <property type="component" value="Chromosome 10"/>
</dbReference>
<dbReference type="RNAct" id="Q9H469">
    <property type="molecule type" value="protein"/>
</dbReference>
<dbReference type="Bgee" id="ENSG00000107872">
    <property type="expression patterns" value="Expressed in adenohypophysis and 128 other cell types or tissues"/>
</dbReference>
<dbReference type="ExpressionAtlas" id="Q9H469">
    <property type="expression patterns" value="baseline and differential"/>
</dbReference>
<dbReference type="GO" id="GO:0005737">
    <property type="term" value="C:cytoplasm"/>
    <property type="evidence" value="ECO:0000314"/>
    <property type="project" value="UniProtKB"/>
</dbReference>
<dbReference type="GO" id="GO:0005829">
    <property type="term" value="C:cytosol"/>
    <property type="evidence" value="ECO:0000304"/>
    <property type="project" value="Reactome"/>
</dbReference>
<dbReference type="GO" id="GO:0019005">
    <property type="term" value="C:SCF ubiquitin ligase complex"/>
    <property type="evidence" value="ECO:0000314"/>
    <property type="project" value="UniProtKB"/>
</dbReference>
<dbReference type="GO" id="GO:0030282">
    <property type="term" value="P:bone mineralization"/>
    <property type="evidence" value="ECO:0000250"/>
    <property type="project" value="UniProtKB"/>
</dbReference>
<dbReference type="GO" id="GO:0009953">
    <property type="term" value="P:dorsal/ventral pattern formation"/>
    <property type="evidence" value="ECO:0000250"/>
    <property type="project" value="UniProtKB"/>
</dbReference>
<dbReference type="GO" id="GO:0000086">
    <property type="term" value="P:G2/M transition of mitotic cell cycle"/>
    <property type="evidence" value="ECO:0000315"/>
    <property type="project" value="UniProtKB"/>
</dbReference>
<dbReference type="GO" id="GO:0030513">
    <property type="term" value="P:positive regulation of BMP signaling pathway"/>
    <property type="evidence" value="ECO:0000315"/>
    <property type="project" value="UniProtKB"/>
</dbReference>
<dbReference type="GO" id="GO:0016567">
    <property type="term" value="P:protein ubiquitination"/>
    <property type="evidence" value="ECO:0000314"/>
    <property type="project" value="UniProtKB"/>
</dbReference>
<dbReference type="GO" id="GO:0031146">
    <property type="term" value="P:SCF-dependent proteasomal ubiquitin-dependent protein catabolic process"/>
    <property type="evidence" value="ECO:0000314"/>
    <property type="project" value="UniProtKB"/>
</dbReference>
<dbReference type="CDD" id="cd22126">
    <property type="entry name" value="F-box_FBXL15"/>
    <property type="match status" value="1"/>
</dbReference>
<dbReference type="FunFam" id="3.80.10.10:FF:000113">
    <property type="entry name" value="F-box/LRR-repeat protein 15 isoform X1"/>
    <property type="match status" value="1"/>
</dbReference>
<dbReference type="Gene3D" id="3.80.10.10">
    <property type="entry name" value="Ribonuclease Inhibitor"/>
    <property type="match status" value="1"/>
</dbReference>
<dbReference type="InterPro" id="IPR036047">
    <property type="entry name" value="F-box-like_dom_sf"/>
</dbReference>
<dbReference type="InterPro" id="IPR001810">
    <property type="entry name" value="F-box_dom"/>
</dbReference>
<dbReference type="InterPro" id="IPR001611">
    <property type="entry name" value="Leu-rich_rpt"/>
</dbReference>
<dbReference type="InterPro" id="IPR006553">
    <property type="entry name" value="Leu-rich_rpt_Cys-con_subtyp"/>
</dbReference>
<dbReference type="InterPro" id="IPR032675">
    <property type="entry name" value="LRR_dom_sf"/>
</dbReference>
<dbReference type="InterPro" id="IPR055411">
    <property type="entry name" value="LRR_FXL15/At3g58940/PEG3-like"/>
</dbReference>
<dbReference type="PANTHER" id="PTHR13318:SF179">
    <property type="entry name" value="F-BOX_LRR-REPEAT PROTEIN 15"/>
    <property type="match status" value="1"/>
</dbReference>
<dbReference type="PANTHER" id="PTHR13318">
    <property type="entry name" value="PARTNER OF PAIRED, ISOFORM B-RELATED"/>
    <property type="match status" value="1"/>
</dbReference>
<dbReference type="Pfam" id="PF00646">
    <property type="entry name" value="F-box"/>
    <property type="match status" value="1"/>
</dbReference>
<dbReference type="Pfam" id="PF13516">
    <property type="entry name" value="LRR_6"/>
    <property type="match status" value="1"/>
</dbReference>
<dbReference type="Pfam" id="PF24758">
    <property type="entry name" value="LRR_At5g56370"/>
    <property type="match status" value="1"/>
</dbReference>
<dbReference type="SMART" id="SM00367">
    <property type="entry name" value="LRR_CC"/>
    <property type="match status" value="6"/>
</dbReference>
<dbReference type="SUPFAM" id="SSF81383">
    <property type="entry name" value="F-box domain"/>
    <property type="match status" value="1"/>
</dbReference>
<dbReference type="SUPFAM" id="SSF52047">
    <property type="entry name" value="RNI-like"/>
    <property type="match status" value="1"/>
</dbReference>
<feature type="chain" id="PRO_0000119931" description="F-box/LRR-repeat protein 15">
    <location>
        <begin position="1"/>
        <end position="300"/>
    </location>
</feature>
<feature type="domain" description="F-box">
    <location>
        <begin position="19"/>
        <end position="66"/>
    </location>
</feature>
<feature type="repeat" description="LRR 1">
    <location>
        <begin position="141"/>
        <end position="162"/>
    </location>
</feature>
<feature type="repeat" description="LRR 2">
    <location>
        <begin position="167"/>
        <end position="188"/>
    </location>
</feature>
<feature type="repeat" description="LRR 3">
    <location>
        <begin position="194"/>
        <end position="215"/>
    </location>
</feature>
<feature type="repeat" description="LRR 4">
    <location>
        <begin position="220"/>
        <end position="241"/>
    </location>
</feature>
<feature type="repeat" description="LRR 5">
    <location>
        <begin position="246"/>
        <end position="267"/>
    </location>
</feature>
<feature type="region of interest" description="Interaction with SMURF1" evidence="1">
    <location>
        <begin position="113"/>
        <end position="269"/>
    </location>
</feature>
<feature type="modified residue" description="N-acetylmethionine" evidence="3">
    <location>
        <position position="1"/>
    </location>
</feature>
<feature type="sequence conflict" description="In Ref. 2; AAH36120." evidence="2" ref="2">
    <original>R</original>
    <variation>H</variation>
    <location>
        <position position="164"/>
    </location>
</feature>
<organism>
    <name type="scientific">Homo sapiens</name>
    <name type="common">Human</name>
    <dbReference type="NCBI Taxonomy" id="9606"/>
    <lineage>
        <taxon>Eukaryota</taxon>
        <taxon>Metazoa</taxon>
        <taxon>Chordata</taxon>
        <taxon>Craniata</taxon>
        <taxon>Vertebrata</taxon>
        <taxon>Euteleostomi</taxon>
        <taxon>Mammalia</taxon>
        <taxon>Eutheria</taxon>
        <taxon>Euarchontoglires</taxon>
        <taxon>Primates</taxon>
        <taxon>Haplorrhini</taxon>
        <taxon>Catarrhini</taxon>
        <taxon>Hominidae</taxon>
        <taxon>Homo</taxon>
    </lineage>
</organism>
<accession>Q9H469</accession>
<accession>A1L4J8</accession>
<accession>B1AKX8</accession>
<accession>B1AKX9</accession>
<accession>B1AKY0</accession>
<accession>B1AKY1</accession>
<accession>C9JWA4</accession>
<accession>Q0D2Q3</accession>
<accession>Q49AL7</accession>
<accession>Q5JWA5</accession>
<sequence>MEPPMEPSGGEQEPGAVRFLDLPWEDVLLPHVLNRVPLRQLLRLQRVSRAFRSLVQLHLAGLRRFDAAQVGPQIPRAALARLLRDAEGLQELALAPCHEWLSDEDLVPVLARNPQLRSVALGGCGQLSRRALGALAEGCPRLQRLSLAHCDWVDGLALRGLADRCPALEELDLTACRQLKDEAIVYLAQRRGAGLRSLSLAVNANVGDAAVQELARNCPELHHLDLTGCLRVGSDGVRTLAEYCPVLRSLRVRHCHHVAESSLSRLRKRGVDIDVEPPLHQALVLLQDMAGFAPFVNLQV</sequence>
<proteinExistence type="evidence at protein level"/>
<comment type="function">
    <text evidence="1">Substrate recognition component of a SCF (SKP1-CUL1-F-box protein) E3 ubiquitin-protein ligase complex which mediates the ubiquitination and subsequent proteasomal degradation of SMURF1, thereby acting as a positive regulator of the BMP signaling pathway. Required for dorsal/ventral pattern formation and bone mass maintenance. Also mediates ubiquitination of SMURF2 and WWP2.</text>
</comment>
<comment type="pathway">
    <text>Protein modification; protein ubiquitination.</text>
</comment>
<comment type="subunit">
    <text evidence="1">Part of the SCF (SKP1-CUL1-F-box) E3 ubiquitin-protein ligase complex SCF(FBXL15) composed of CUL1, SKP1, RBX1 and FBXL15.</text>
</comment>
<comment type="interaction">
    <interactant intactId="EBI-6144096">
        <id>Q9H469</id>
    </interactant>
    <interactant intactId="EBI-976466">
        <id>Q9HCE7</id>
        <label>SMURF1</label>
    </interactant>
    <organismsDiffer>false</organismsDiffer>
    <experiments>6</experiments>
</comment>
<comment type="interaction">
    <interactant intactId="EBI-6144096">
        <id>Q9H469</id>
    </interactant>
    <interactant intactId="EBI-396727">
        <id>Q9HAU4</id>
        <label>SMURF2</label>
    </interactant>
    <organismsDiffer>false</organismsDiffer>
    <experiments>3</experiments>
</comment>
<comment type="subcellular location">
    <subcellularLocation>
        <location evidence="1">Cytoplasm</location>
    </subcellularLocation>
</comment>
<comment type="similarity">
    <text evidence="2">Belongs to the FBXL15 family.</text>
</comment>
<comment type="sequence caution" evidence="2">
    <conflict type="erroneous initiation">
        <sequence resource="EMBL-CDS" id="AAH02912"/>
    </conflict>
    <text>Truncated N-terminus.</text>
</comment>
<comment type="sequence caution" evidence="2">
    <conflict type="erroneous initiation">
        <sequence resource="EMBL-CDS" id="AAH36120"/>
    </conflict>
    <text>Truncated N-terminus.</text>
</comment>
<protein>
    <recommendedName>
        <fullName>F-box/LRR-repeat protein 15</fullName>
    </recommendedName>
    <alternativeName>
        <fullName>F-box only protein 37</fullName>
    </alternativeName>
</protein>
<gene>
    <name type="primary">FBXL15</name>
    <name type="synonym">FBXO37</name>
</gene>
<evidence type="ECO:0000269" key="1">
    <source>
    </source>
</evidence>
<evidence type="ECO:0000305" key="2"/>
<evidence type="ECO:0007744" key="3">
    <source>
    </source>
</evidence>
<name>FXL15_HUMAN</name>